<keyword id="KW-0238">DNA-binding</keyword>
<keyword id="KW-0678">Repressor</keyword>
<keyword id="KW-0804">Transcription</keyword>
<keyword id="KW-0805">Transcription regulation</keyword>
<sequence>MPKVGMQPIRRQQLIEATMAAVNEVGMHEASIAQIAKRAGVSNGIISHYFRDKNGLLEATMRYLIRHLGEAVKQHLAALSVNDPRARLRAIAEGNFDDSQINSAAMKTWLAFWASSMHSPQLYRLQQVNNRRLYSNLCAEFKRCLPREQAQLAAKGMAGLIDGLWLRSALSGEHFNRQEALLIIHNYIEQQLNIKYKC</sequence>
<protein>
    <recommendedName>
        <fullName evidence="2">HTH-type transcriptional regulator BetI</fullName>
    </recommendedName>
</protein>
<dbReference type="EMBL" id="CP000668">
    <property type="protein sequence ID" value="ABP40902.1"/>
    <property type="molecule type" value="Genomic_DNA"/>
</dbReference>
<dbReference type="RefSeq" id="WP_002218278.1">
    <property type="nucleotide sequence ID" value="NZ_CP009715.1"/>
</dbReference>
<dbReference type="SMR" id="A4TNP0"/>
<dbReference type="GeneID" id="57977306"/>
<dbReference type="KEGG" id="ypp:YPDSF_2530"/>
<dbReference type="PATRIC" id="fig|386656.14.peg.4047"/>
<dbReference type="UniPathway" id="UPA00529"/>
<dbReference type="GO" id="GO:0003700">
    <property type="term" value="F:DNA-binding transcription factor activity"/>
    <property type="evidence" value="ECO:0007669"/>
    <property type="project" value="UniProtKB-UniRule"/>
</dbReference>
<dbReference type="GO" id="GO:0000976">
    <property type="term" value="F:transcription cis-regulatory region binding"/>
    <property type="evidence" value="ECO:0007669"/>
    <property type="project" value="TreeGrafter"/>
</dbReference>
<dbReference type="GO" id="GO:0019285">
    <property type="term" value="P:glycine betaine biosynthetic process from choline"/>
    <property type="evidence" value="ECO:0007669"/>
    <property type="project" value="UniProtKB-UniRule"/>
</dbReference>
<dbReference type="GO" id="GO:0045892">
    <property type="term" value="P:negative regulation of DNA-templated transcription"/>
    <property type="evidence" value="ECO:0007669"/>
    <property type="project" value="UniProtKB-UniRule"/>
</dbReference>
<dbReference type="Gene3D" id="1.10.357.10">
    <property type="entry name" value="Tetracycline Repressor, domain 2"/>
    <property type="match status" value="1"/>
</dbReference>
<dbReference type="HAMAP" id="MF_00768">
    <property type="entry name" value="HTH_type_BetI"/>
    <property type="match status" value="1"/>
</dbReference>
<dbReference type="InterPro" id="IPR039538">
    <property type="entry name" value="BetI_C"/>
</dbReference>
<dbReference type="InterPro" id="IPR023772">
    <property type="entry name" value="DNA-bd_HTH_TetR-type_CS"/>
</dbReference>
<dbReference type="InterPro" id="IPR009057">
    <property type="entry name" value="Homeodomain-like_sf"/>
</dbReference>
<dbReference type="InterPro" id="IPR050109">
    <property type="entry name" value="HTH-type_TetR-like_transc_reg"/>
</dbReference>
<dbReference type="InterPro" id="IPR001647">
    <property type="entry name" value="HTH_TetR"/>
</dbReference>
<dbReference type="InterPro" id="IPR036271">
    <property type="entry name" value="Tet_transcr_reg_TetR-rel_C_sf"/>
</dbReference>
<dbReference type="InterPro" id="IPR017757">
    <property type="entry name" value="Tscrpt_rep_BetI"/>
</dbReference>
<dbReference type="NCBIfam" id="TIGR03384">
    <property type="entry name" value="betaine_BetI"/>
    <property type="match status" value="1"/>
</dbReference>
<dbReference type="NCBIfam" id="NF001978">
    <property type="entry name" value="PRK00767.1"/>
    <property type="match status" value="1"/>
</dbReference>
<dbReference type="PANTHER" id="PTHR30055:SF234">
    <property type="entry name" value="HTH-TYPE TRANSCRIPTIONAL REGULATOR BETI"/>
    <property type="match status" value="1"/>
</dbReference>
<dbReference type="PANTHER" id="PTHR30055">
    <property type="entry name" value="HTH-TYPE TRANSCRIPTIONAL REGULATOR RUTR"/>
    <property type="match status" value="1"/>
</dbReference>
<dbReference type="Pfam" id="PF13977">
    <property type="entry name" value="TetR_C_6"/>
    <property type="match status" value="1"/>
</dbReference>
<dbReference type="Pfam" id="PF00440">
    <property type="entry name" value="TetR_N"/>
    <property type="match status" value="1"/>
</dbReference>
<dbReference type="PRINTS" id="PR00455">
    <property type="entry name" value="HTHTETR"/>
</dbReference>
<dbReference type="SUPFAM" id="SSF46689">
    <property type="entry name" value="Homeodomain-like"/>
    <property type="match status" value="1"/>
</dbReference>
<dbReference type="SUPFAM" id="SSF48498">
    <property type="entry name" value="Tetracyclin repressor-like, C-terminal domain"/>
    <property type="match status" value="1"/>
</dbReference>
<dbReference type="PROSITE" id="PS01081">
    <property type="entry name" value="HTH_TETR_1"/>
    <property type="match status" value="1"/>
</dbReference>
<dbReference type="PROSITE" id="PS50977">
    <property type="entry name" value="HTH_TETR_2"/>
    <property type="match status" value="1"/>
</dbReference>
<reference key="1">
    <citation type="submission" date="2007-02" db="EMBL/GenBank/DDBJ databases">
        <title>Complete sequence of chromosome of Yersinia pestis Pestoides F.</title>
        <authorList>
            <consortium name="US DOE Joint Genome Institute"/>
            <person name="Copeland A."/>
            <person name="Lucas S."/>
            <person name="Lapidus A."/>
            <person name="Barry K."/>
            <person name="Detter J.C."/>
            <person name="Glavina del Rio T."/>
            <person name="Hammon N."/>
            <person name="Israni S."/>
            <person name="Dalin E."/>
            <person name="Tice H."/>
            <person name="Pitluck S."/>
            <person name="Di Bartolo G."/>
            <person name="Chain P."/>
            <person name="Malfatti S."/>
            <person name="Shin M."/>
            <person name="Vergez L."/>
            <person name="Schmutz J."/>
            <person name="Larimer F."/>
            <person name="Land M."/>
            <person name="Hauser L."/>
            <person name="Worsham P."/>
            <person name="Chu M."/>
            <person name="Bearden S."/>
            <person name="Garcia E."/>
            <person name="Richardson P."/>
        </authorList>
    </citation>
    <scope>NUCLEOTIDE SEQUENCE [LARGE SCALE GENOMIC DNA]</scope>
    <source>
        <strain>Pestoides F</strain>
    </source>
</reference>
<name>BETI_YERPP</name>
<gene>
    <name evidence="2" type="primary">betI</name>
    <name type="ordered locus">YPDSF_2530</name>
</gene>
<organism>
    <name type="scientific">Yersinia pestis (strain Pestoides F)</name>
    <dbReference type="NCBI Taxonomy" id="386656"/>
    <lineage>
        <taxon>Bacteria</taxon>
        <taxon>Pseudomonadati</taxon>
        <taxon>Pseudomonadota</taxon>
        <taxon>Gammaproteobacteria</taxon>
        <taxon>Enterobacterales</taxon>
        <taxon>Yersiniaceae</taxon>
        <taxon>Yersinia</taxon>
    </lineage>
</organism>
<comment type="function">
    <text evidence="1">Repressor involved in the biosynthesis of the osmoprotectant glycine betaine. It represses transcription of the choline transporter BetT and the genes of BetAB involved in the synthesis of glycine betaine (By similarity).</text>
</comment>
<comment type="pathway">
    <text>Amine and polyamine biosynthesis; betaine biosynthesis via choline pathway [regulation].</text>
</comment>
<accession>A4TNP0</accession>
<evidence type="ECO:0000250" key="1"/>
<evidence type="ECO:0000255" key="2">
    <source>
        <dbReference type="HAMAP-Rule" id="MF_00768"/>
    </source>
</evidence>
<feature type="chain" id="PRO_1000083572" description="HTH-type transcriptional regulator BetI">
    <location>
        <begin position="1"/>
        <end position="198"/>
    </location>
</feature>
<feature type="domain" description="HTH tetR-type" evidence="2">
    <location>
        <begin position="8"/>
        <end position="68"/>
    </location>
</feature>
<feature type="DNA-binding region" description="H-T-H motif" evidence="2">
    <location>
        <begin position="31"/>
        <end position="50"/>
    </location>
</feature>
<proteinExistence type="inferred from homology"/>